<keyword id="KW-0687">Ribonucleoprotein</keyword>
<keyword id="KW-0689">Ribosomal protein</keyword>
<keyword id="KW-0694">RNA-binding</keyword>
<keyword id="KW-0699">rRNA-binding</keyword>
<dbReference type="EMBL" id="CP000269">
    <property type="protein sequence ID" value="ABR89136.1"/>
    <property type="molecule type" value="Genomic_DNA"/>
</dbReference>
<dbReference type="RefSeq" id="WP_012081244.1">
    <property type="nucleotide sequence ID" value="NC_009659.1"/>
</dbReference>
<dbReference type="SMR" id="A6T3J8"/>
<dbReference type="STRING" id="375286.mma_3405"/>
<dbReference type="KEGG" id="mms:mma_3405"/>
<dbReference type="eggNOG" id="COG0092">
    <property type="taxonomic scope" value="Bacteria"/>
</dbReference>
<dbReference type="HOGENOM" id="CLU_058591_0_2_4"/>
<dbReference type="OrthoDB" id="9806396at2"/>
<dbReference type="Proteomes" id="UP000006388">
    <property type="component" value="Chromosome"/>
</dbReference>
<dbReference type="GO" id="GO:0022627">
    <property type="term" value="C:cytosolic small ribosomal subunit"/>
    <property type="evidence" value="ECO:0007669"/>
    <property type="project" value="TreeGrafter"/>
</dbReference>
<dbReference type="GO" id="GO:0003729">
    <property type="term" value="F:mRNA binding"/>
    <property type="evidence" value="ECO:0007669"/>
    <property type="project" value="UniProtKB-UniRule"/>
</dbReference>
<dbReference type="GO" id="GO:0019843">
    <property type="term" value="F:rRNA binding"/>
    <property type="evidence" value="ECO:0007669"/>
    <property type="project" value="UniProtKB-UniRule"/>
</dbReference>
<dbReference type="GO" id="GO:0003735">
    <property type="term" value="F:structural constituent of ribosome"/>
    <property type="evidence" value="ECO:0007669"/>
    <property type="project" value="InterPro"/>
</dbReference>
<dbReference type="GO" id="GO:0006412">
    <property type="term" value="P:translation"/>
    <property type="evidence" value="ECO:0007669"/>
    <property type="project" value="UniProtKB-UniRule"/>
</dbReference>
<dbReference type="CDD" id="cd02412">
    <property type="entry name" value="KH-II_30S_S3"/>
    <property type="match status" value="1"/>
</dbReference>
<dbReference type="FunFam" id="3.30.1140.32:FF:000006">
    <property type="entry name" value="30S ribosomal protein S3"/>
    <property type="match status" value="1"/>
</dbReference>
<dbReference type="FunFam" id="3.30.300.20:FF:000001">
    <property type="entry name" value="30S ribosomal protein S3"/>
    <property type="match status" value="1"/>
</dbReference>
<dbReference type="Gene3D" id="3.30.300.20">
    <property type="match status" value="1"/>
</dbReference>
<dbReference type="Gene3D" id="3.30.1140.32">
    <property type="entry name" value="Ribosomal protein S3, C-terminal domain"/>
    <property type="match status" value="1"/>
</dbReference>
<dbReference type="HAMAP" id="MF_01309_B">
    <property type="entry name" value="Ribosomal_uS3_B"/>
    <property type="match status" value="1"/>
</dbReference>
<dbReference type="InterPro" id="IPR004087">
    <property type="entry name" value="KH_dom"/>
</dbReference>
<dbReference type="InterPro" id="IPR015946">
    <property type="entry name" value="KH_dom-like_a/b"/>
</dbReference>
<dbReference type="InterPro" id="IPR004044">
    <property type="entry name" value="KH_dom_type_2"/>
</dbReference>
<dbReference type="InterPro" id="IPR009019">
    <property type="entry name" value="KH_sf_prok-type"/>
</dbReference>
<dbReference type="InterPro" id="IPR036419">
    <property type="entry name" value="Ribosomal_S3_C_sf"/>
</dbReference>
<dbReference type="InterPro" id="IPR005704">
    <property type="entry name" value="Ribosomal_uS3_bac-typ"/>
</dbReference>
<dbReference type="InterPro" id="IPR001351">
    <property type="entry name" value="Ribosomal_uS3_C"/>
</dbReference>
<dbReference type="InterPro" id="IPR018280">
    <property type="entry name" value="Ribosomal_uS3_CS"/>
</dbReference>
<dbReference type="NCBIfam" id="TIGR01009">
    <property type="entry name" value="rpsC_bact"/>
    <property type="match status" value="1"/>
</dbReference>
<dbReference type="PANTHER" id="PTHR11760">
    <property type="entry name" value="30S/40S RIBOSOMAL PROTEIN S3"/>
    <property type="match status" value="1"/>
</dbReference>
<dbReference type="PANTHER" id="PTHR11760:SF19">
    <property type="entry name" value="SMALL RIBOSOMAL SUBUNIT PROTEIN US3C"/>
    <property type="match status" value="1"/>
</dbReference>
<dbReference type="Pfam" id="PF07650">
    <property type="entry name" value="KH_2"/>
    <property type="match status" value="1"/>
</dbReference>
<dbReference type="Pfam" id="PF00189">
    <property type="entry name" value="Ribosomal_S3_C"/>
    <property type="match status" value="1"/>
</dbReference>
<dbReference type="SMART" id="SM00322">
    <property type="entry name" value="KH"/>
    <property type="match status" value="1"/>
</dbReference>
<dbReference type="SUPFAM" id="SSF54814">
    <property type="entry name" value="Prokaryotic type KH domain (KH-domain type II)"/>
    <property type="match status" value="1"/>
</dbReference>
<dbReference type="SUPFAM" id="SSF54821">
    <property type="entry name" value="Ribosomal protein S3 C-terminal domain"/>
    <property type="match status" value="1"/>
</dbReference>
<dbReference type="PROSITE" id="PS50823">
    <property type="entry name" value="KH_TYPE_2"/>
    <property type="match status" value="1"/>
</dbReference>
<dbReference type="PROSITE" id="PS00548">
    <property type="entry name" value="RIBOSOMAL_S3"/>
    <property type="match status" value="1"/>
</dbReference>
<proteinExistence type="inferred from homology"/>
<comment type="function">
    <text evidence="1">Binds the lower part of the 30S subunit head. Binds mRNA in the 70S ribosome, positioning it for translation.</text>
</comment>
<comment type="subunit">
    <text evidence="1">Part of the 30S ribosomal subunit. Forms a tight complex with proteins S10 and S14.</text>
</comment>
<comment type="similarity">
    <text evidence="1">Belongs to the universal ribosomal protein uS3 family.</text>
</comment>
<organism>
    <name type="scientific">Janthinobacterium sp. (strain Marseille)</name>
    <name type="common">Minibacterium massiliensis</name>
    <dbReference type="NCBI Taxonomy" id="375286"/>
    <lineage>
        <taxon>Bacteria</taxon>
        <taxon>Pseudomonadati</taxon>
        <taxon>Pseudomonadota</taxon>
        <taxon>Betaproteobacteria</taxon>
        <taxon>Burkholderiales</taxon>
        <taxon>Oxalobacteraceae</taxon>
        <taxon>Janthinobacterium</taxon>
    </lineage>
</organism>
<sequence length="283" mass="31093">MGQKIHPTGFRLAVSRNWASRWYAGNSNFATMLNEDLKVRAYLKTKLKNASVGRVVIERPAKNARITIYSSRPGVVIGKKGEDIEVLKSALTKMMGVPVHVNIEEIRKPETDAQLIADSIAQQLEKRIMFRRAMKRAMQNAMRLGAQGIKIMSSGRLNGIEIARKEWYREGRVPLHTLRADIDYGFGEAETTYGIIGIKVWVYKGDRLANGEAPVIDVASDDDKKRRGPRRDDGKPSGRPRAPRPEGQPGAAAPGSAPAAKRVRAKKPDGAVDAAVSAEKAGE</sequence>
<name>RS3_JANMA</name>
<reference key="1">
    <citation type="journal article" date="2007" name="PLoS Genet.">
        <title>Genome analysis of Minibacterium massiliensis highlights the convergent evolution of water-living bacteria.</title>
        <authorList>
            <person name="Audic S."/>
            <person name="Robert C."/>
            <person name="Campagna B."/>
            <person name="Parinello H."/>
            <person name="Claverie J.-M."/>
            <person name="Raoult D."/>
            <person name="Drancourt M."/>
        </authorList>
    </citation>
    <scope>NUCLEOTIDE SEQUENCE [LARGE SCALE GENOMIC DNA]</scope>
    <source>
        <strain>Marseille</strain>
    </source>
</reference>
<gene>
    <name evidence="1" type="primary">rpsC</name>
    <name type="ordered locus">mma_3405</name>
</gene>
<evidence type="ECO:0000255" key="1">
    <source>
        <dbReference type="HAMAP-Rule" id="MF_01309"/>
    </source>
</evidence>
<evidence type="ECO:0000256" key="2">
    <source>
        <dbReference type="SAM" id="MobiDB-lite"/>
    </source>
</evidence>
<evidence type="ECO:0000305" key="3"/>
<protein>
    <recommendedName>
        <fullName evidence="1">Small ribosomal subunit protein uS3</fullName>
    </recommendedName>
    <alternativeName>
        <fullName evidence="3">30S ribosomal protein S3</fullName>
    </alternativeName>
</protein>
<accession>A6T3J8</accession>
<feature type="chain" id="PRO_1000086128" description="Small ribosomal subunit protein uS3">
    <location>
        <begin position="1"/>
        <end position="283"/>
    </location>
</feature>
<feature type="domain" description="KH type-2" evidence="1">
    <location>
        <begin position="39"/>
        <end position="107"/>
    </location>
</feature>
<feature type="region of interest" description="Disordered" evidence="2">
    <location>
        <begin position="219"/>
        <end position="283"/>
    </location>
</feature>
<feature type="compositionally biased region" description="Basic and acidic residues" evidence="2">
    <location>
        <begin position="221"/>
        <end position="236"/>
    </location>
</feature>
<feature type="compositionally biased region" description="Low complexity" evidence="2">
    <location>
        <begin position="237"/>
        <end position="260"/>
    </location>
</feature>